<name>HIS5_SALTY</name>
<comment type="function">
    <text evidence="1">IGPS catalyzes the conversion of PRFAR and glutamine to IGP, AICAR and glutamate. The HisH subunit catalyzes the hydrolysis of glutamine to glutamate and ammonia as part of the synthesis of IGP and AICAR. The resulting ammonia molecule is channeled to the active site of HisF (By similarity).</text>
</comment>
<comment type="catalytic activity">
    <reaction>
        <text>5-[(5-phospho-1-deoxy-D-ribulos-1-ylimino)methylamino]-1-(5-phospho-beta-D-ribosyl)imidazole-4-carboxamide + L-glutamine = D-erythro-1-(imidazol-4-yl)glycerol 3-phosphate + 5-amino-1-(5-phospho-beta-D-ribosyl)imidazole-4-carboxamide + L-glutamate + H(+)</text>
        <dbReference type="Rhea" id="RHEA:24793"/>
        <dbReference type="ChEBI" id="CHEBI:15378"/>
        <dbReference type="ChEBI" id="CHEBI:29985"/>
        <dbReference type="ChEBI" id="CHEBI:58278"/>
        <dbReference type="ChEBI" id="CHEBI:58359"/>
        <dbReference type="ChEBI" id="CHEBI:58475"/>
        <dbReference type="ChEBI" id="CHEBI:58525"/>
        <dbReference type="EC" id="4.3.2.10"/>
    </reaction>
</comment>
<comment type="catalytic activity">
    <reaction>
        <text>L-glutamine + H2O = L-glutamate + NH4(+)</text>
        <dbReference type="Rhea" id="RHEA:15889"/>
        <dbReference type="ChEBI" id="CHEBI:15377"/>
        <dbReference type="ChEBI" id="CHEBI:28938"/>
        <dbReference type="ChEBI" id="CHEBI:29985"/>
        <dbReference type="ChEBI" id="CHEBI:58359"/>
        <dbReference type="EC" id="3.5.1.2"/>
    </reaction>
</comment>
<comment type="pathway">
    <text>Amino-acid biosynthesis; L-histidine biosynthesis; L-histidine from 5-phospho-alpha-D-ribose 1-diphosphate: step 5/9.</text>
</comment>
<comment type="subunit">
    <text evidence="1">Heterodimer of HisH and HisF.</text>
</comment>
<comment type="subcellular location">
    <subcellularLocation>
        <location evidence="1">Cytoplasm</location>
    </subcellularLocation>
</comment>
<comment type="sequence caution" evidence="2">
    <conflict type="erroneous initiation">
        <sequence resource="EMBL-CDS" id="AAL20979"/>
    </conflict>
</comment>
<reference key="1">
    <citation type="journal article" date="1988" name="J. Mol. Biol.">
        <title>Structure and function of the Salmonella typhimurium and Escherichia coli K-12 histidine operons.</title>
        <authorList>
            <person name="Carlomagno M.S."/>
            <person name="Chiariotti L."/>
            <person name="Alifano P."/>
            <person name="Nappo A.G."/>
            <person name="Bruni C.B."/>
        </authorList>
    </citation>
    <scope>NUCLEOTIDE SEQUENCE [GENOMIC DNA]</scope>
    <source>
        <strain>LT2</strain>
    </source>
</reference>
<reference key="2">
    <citation type="journal article" date="2001" name="Nature">
        <title>Complete genome sequence of Salmonella enterica serovar Typhimurium LT2.</title>
        <authorList>
            <person name="McClelland M."/>
            <person name="Sanderson K.E."/>
            <person name="Spieth J."/>
            <person name="Clifton S.W."/>
            <person name="Latreille P."/>
            <person name="Courtney L."/>
            <person name="Porwollik S."/>
            <person name="Ali J."/>
            <person name="Dante M."/>
            <person name="Du F."/>
            <person name="Hou S."/>
            <person name="Layman D."/>
            <person name="Leonard S."/>
            <person name="Nguyen C."/>
            <person name="Scott K."/>
            <person name="Holmes A."/>
            <person name="Grewal N."/>
            <person name="Mulvaney E."/>
            <person name="Ryan E."/>
            <person name="Sun H."/>
            <person name="Florea L."/>
            <person name="Miller W."/>
            <person name="Stoneking T."/>
            <person name="Nhan M."/>
            <person name="Waterston R."/>
            <person name="Wilson R.K."/>
        </authorList>
    </citation>
    <scope>NUCLEOTIDE SEQUENCE [LARGE SCALE GENOMIC DNA]</scope>
    <source>
        <strain>LT2 / SGSC1412 / ATCC 700720</strain>
    </source>
</reference>
<sequence>MNVVILDTGCANLSSVKSAVARHGYTPVVSREAEIVLRADKLFLPGVGTAQAAMDQLRERELIDLIKACTQPVLGICLGMQLLGRRSEETRGVDLLNIIEQDVPKMTDFGLPLPHMGWNRVYPQAGNRLFQGIEDGAYFYFVHSYAMPVNPWTIAQCNYGEPFTAAVQKDNFFGVQFHPERSGAAGAQLLKNFLEM</sequence>
<keyword id="KW-0028">Amino-acid biosynthesis</keyword>
<keyword id="KW-0963">Cytoplasm</keyword>
<keyword id="KW-0315">Glutamine amidotransferase</keyword>
<keyword id="KW-0368">Histidine biosynthesis</keyword>
<keyword id="KW-0378">Hydrolase</keyword>
<keyword id="KW-0456">Lyase</keyword>
<keyword id="KW-1185">Reference proteome</keyword>
<protein>
    <recommendedName>
        <fullName>Imidazole glycerol phosphate synthase subunit HisH</fullName>
        <ecNumber>4.3.2.10</ecNumber>
    </recommendedName>
    <alternativeName>
        <fullName>IGP synthase glutaminase subunit</fullName>
        <ecNumber>3.5.1.2</ecNumber>
    </alternativeName>
    <alternativeName>
        <fullName>IGP synthase subunit HisH</fullName>
    </alternativeName>
    <alternativeName>
        <fullName>ImGP synthase subunit HisH</fullName>
        <shortName>IGPS subunit HisH</shortName>
    </alternativeName>
</protein>
<proteinExistence type="inferred from homology"/>
<accession>P0A1R4</accession>
<accession>P10376</accession>
<dbReference type="EC" id="4.3.2.10"/>
<dbReference type="EC" id="3.5.1.2"/>
<dbReference type="EMBL" id="X13464">
    <property type="protein sequence ID" value="CAA31826.1"/>
    <property type="molecule type" value="Genomic_DNA"/>
</dbReference>
<dbReference type="EMBL" id="AE006468">
    <property type="protein sequence ID" value="AAL20979.1"/>
    <property type="status" value="ALT_INIT"/>
    <property type="molecule type" value="Genomic_DNA"/>
</dbReference>
<dbReference type="PIR" id="JS0160">
    <property type="entry name" value="XQEBHT"/>
</dbReference>
<dbReference type="RefSeq" id="NP_461020.3">
    <property type="nucleotide sequence ID" value="NC_003197.2"/>
</dbReference>
<dbReference type="RefSeq" id="WP_001540362.1">
    <property type="nucleotide sequence ID" value="NC_003197.2"/>
</dbReference>
<dbReference type="SMR" id="P0A1R4"/>
<dbReference type="STRING" id="99287.STM2075"/>
<dbReference type="MEROPS" id="C26.965"/>
<dbReference type="PaxDb" id="99287-STM2075"/>
<dbReference type="GeneID" id="1253596"/>
<dbReference type="KEGG" id="stm:STM2075"/>
<dbReference type="PATRIC" id="fig|99287.12.peg.2197"/>
<dbReference type="HOGENOM" id="CLU_071837_0_0_6"/>
<dbReference type="OMA" id="WVYFVHS"/>
<dbReference type="PhylomeDB" id="P0A1R4"/>
<dbReference type="UniPathway" id="UPA00031">
    <property type="reaction ID" value="UER00010"/>
</dbReference>
<dbReference type="Proteomes" id="UP000001014">
    <property type="component" value="Chromosome"/>
</dbReference>
<dbReference type="GO" id="GO:0005737">
    <property type="term" value="C:cytoplasm"/>
    <property type="evidence" value="ECO:0007669"/>
    <property type="project" value="UniProtKB-SubCell"/>
</dbReference>
<dbReference type="GO" id="GO:0004359">
    <property type="term" value="F:glutaminase activity"/>
    <property type="evidence" value="ECO:0007669"/>
    <property type="project" value="UniProtKB-EC"/>
</dbReference>
<dbReference type="GO" id="GO:0000107">
    <property type="term" value="F:imidazoleglycerol-phosphate synthase activity"/>
    <property type="evidence" value="ECO:0000318"/>
    <property type="project" value="GO_Central"/>
</dbReference>
<dbReference type="GO" id="GO:0016829">
    <property type="term" value="F:lyase activity"/>
    <property type="evidence" value="ECO:0007669"/>
    <property type="project" value="UniProtKB-KW"/>
</dbReference>
<dbReference type="GO" id="GO:0000105">
    <property type="term" value="P:L-histidine biosynthetic process"/>
    <property type="evidence" value="ECO:0007669"/>
    <property type="project" value="UniProtKB-UniRule"/>
</dbReference>
<dbReference type="CDD" id="cd01748">
    <property type="entry name" value="GATase1_IGP_Synthase"/>
    <property type="match status" value="1"/>
</dbReference>
<dbReference type="FunFam" id="3.40.50.880:FF:000009">
    <property type="entry name" value="Imidazole glycerol phosphate synthase subunit HisH"/>
    <property type="match status" value="1"/>
</dbReference>
<dbReference type="Gene3D" id="3.40.50.880">
    <property type="match status" value="1"/>
</dbReference>
<dbReference type="HAMAP" id="MF_00278">
    <property type="entry name" value="HisH"/>
    <property type="match status" value="1"/>
</dbReference>
<dbReference type="InterPro" id="IPR029062">
    <property type="entry name" value="Class_I_gatase-like"/>
</dbReference>
<dbReference type="InterPro" id="IPR017926">
    <property type="entry name" value="GATASE"/>
</dbReference>
<dbReference type="InterPro" id="IPR010139">
    <property type="entry name" value="Imidazole-glycPsynth_HisH"/>
</dbReference>
<dbReference type="NCBIfam" id="TIGR01855">
    <property type="entry name" value="IMP_synth_hisH"/>
    <property type="match status" value="1"/>
</dbReference>
<dbReference type="PANTHER" id="PTHR42701">
    <property type="entry name" value="IMIDAZOLE GLYCEROL PHOSPHATE SYNTHASE SUBUNIT HISH"/>
    <property type="match status" value="1"/>
</dbReference>
<dbReference type="PANTHER" id="PTHR42701:SF1">
    <property type="entry name" value="IMIDAZOLE GLYCEROL PHOSPHATE SYNTHASE SUBUNIT HISH"/>
    <property type="match status" value="1"/>
</dbReference>
<dbReference type="Pfam" id="PF00117">
    <property type="entry name" value="GATase"/>
    <property type="match status" value="1"/>
</dbReference>
<dbReference type="PIRSF" id="PIRSF000495">
    <property type="entry name" value="Amidotransf_hisH"/>
    <property type="match status" value="1"/>
</dbReference>
<dbReference type="PRINTS" id="PR00096">
    <property type="entry name" value="GATASE"/>
</dbReference>
<dbReference type="SUPFAM" id="SSF52317">
    <property type="entry name" value="Class I glutamine amidotransferase-like"/>
    <property type="match status" value="1"/>
</dbReference>
<dbReference type="PROSITE" id="PS51273">
    <property type="entry name" value="GATASE_TYPE_1"/>
    <property type="match status" value="1"/>
</dbReference>
<feature type="chain" id="PRO_0000152419" description="Imidazole glycerol phosphate synthase subunit HisH">
    <location>
        <begin position="1"/>
        <end position="196"/>
    </location>
</feature>
<feature type="domain" description="Glutamine amidotransferase type-1">
    <location>
        <begin position="2"/>
        <end position="196"/>
    </location>
</feature>
<feature type="active site" description="Nucleophile" evidence="1">
    <location>
        <position position="77"/>
    </location>
</feature>
<feature type="active site" evidence="1">
    <location>
        <position position="178"/>
    </location>
</feature>
<feature type="active site" evidence="1">
    <location>
        <position position="180"/>
    </location>
</feature>
<feature type="sequence conflict" description="In Ref. 1; CAA31826." evidence="2" ref="1">
    <location>
        <position position="9"/>
    </location>
</feature>
<feature type="sequence conflict" description="In Ref. 1; CAA31826." evidence="2" ref="1">
    <original>VARHGYTPVVS</original>
    <variation>GAPRLHPGGQ</variation>
    <location>
        <begin position="20"/>
        <end position="30"/>
    </location>
</feature>
<feature type="sequence conflict" description="In Ref. 1; CAA31826." evidence="2" ref="1">
    <original>L</original>
    <variation>V</variation>
    <location>
        <position position="57"/>
    </location>
</feature>
<feature type="sequence conflict" description="In Ref. 1; CAA31826." evidence="2" ref="1">
    <original>A</original>
    <variation>R</variation>
    <location>
        <position position="125"/>
    </location>
</feature>
<organism>
    <name type="scientific">Salmonella typhimurium (strain LT2 / SGSC1412 / ATCC 700720)</name>
    <dbReference type="NCBI Taxonomy" id="99287"/>
    <lineage>
        <taxon>Bacteria</taxon>
        <taxon>Pseudomonadati</taxon>
        <taxon>Pseudomonadota</taxon>
        <taxon>Gammaproteobacteria</taxon>
        <taxon>Enterobacterales</taxon>
        <taxon>Enterobacteriaceae</taxon>
        <taxon>Salmonella</taxon>
    </lineage>
</organism>
<gene>
    <name type="primary">hisH</name>
    <name type="ordered locus">STM2075</name>
</gene>
<evidence type="ECO:0000250" key="1"/>
<evidence type="ECO:0000305" key="2"/>